<keyword id="KW-0002">3D-structure</keyword>
<keyword id="KW-1185">Reference proteome</keyword>
<organism>
    <name type="scientific">Archaeoglobus fulgidus (strain ATCC 49558 / DSM 4304 / JCM 9628 / NBRC 100126 / VC-16)</name>
    <dbReference type="NCBI Taxonomy" id="224325"/>
    <lineage>
        <taxon>Archaea</taxon>
        <taxon>Methanobacteriati</taxon>
        <taxon>Methanobacteriota</taxon>
        <taxon>Archaeoglobi</taxon>
        <taxon>Archaeoglobales</taxon>
        <taxon>Archaeoglobaceae</taxon>
        <taxon>Archaeoglobus</taxon>
    </lineage>
</organism>
<evidence type="ECO:0000255" key="1">
    <source>
        <dbReference type="HAMAP-Rule" id="MF_00582"/>
    </source>
</evidence>
<evidence type="ECO:0007829" key="2">
    <source>
        <dbReference type="PDB" id="2QH9"/>
    </source>
</evidence>
<sequence length="181" mass="20467">MKKWRFLGIDDSFDDRKCCVVGCVTCGGYVEGFLYTEIDIDGLDATDKLISMVRRSKFREQIKCIFLPGITLGGFNLVDIQRVYRETKIPVVVVMRRKPDMEEFDSAMRNLENYELRRKIVEVAGEIHRIGDIYIQTAGLTPSEAEKLVKASLIKGNMPEPVRISHLVASAIIHGESRGKA</sequence>
<proteinExistence type="evidence at protein level"/>
<gene>
    <name type="ordered locus">AF_1433</name>
</gene>
<protein>
    <recommendedName>
        <fullName evidence="1">UPF0215 protein AF_1433</fullName>
    </recommendedName>
</protein>
<dbReference type="EMBL" id="AE000782">
    <property type="protein sequence ID" value="AAB89811.1"/>
    <property type="molecule type" value="Genomic_DNA"/>
</dbReference>
<dbReference type="PIR" id="H69428">
    <property type="entry name" value="H69428"/>
</dbReference>
<dbReference type="RefSeq" id="WP_010878930.1">
    <property type="nucleotide sequence ID" value="NC_000917.1"/>
</dbReference>
<dbReference type="PDB" id="2QH9">
    <property type="method" value="X-ray"/>
    <property type="resolution" value="1.80 A"/>
    <property type="chains" value="A/B=1-181"/>
</dbReference>
<dbReference type="PDBsum" id="2QH9"/>
<dbReference type="SMR" id="O28839"/>
<dbReference type="STRING" id="224325.AF_1433"/>
<dbReference type="PaxDb" id="224325-AF_1433"/>
<dbReference type="DNASU" id="1484657"/>
<dbReference type="EnsemblBacteria" id="AAB89811">
    <property type="protein sequence ID" value="AAB89811"/>
    <property type="gene ID" value="AF_1433"/>
</dbReference>
<dbReference type="KEGG" id="afu:AF_1433"/>
<dbReference type="eggNOG" id="arCOG00928">
    <property type="taxonomic scope" value="Archaea"/>
</dbReference>
<dbReference type="HOGENOM" id="CLU_095956_1_0_2"/>
<dbReference type="OrthoDB" id="15207at2157"/>
<dbReference type="PhylomeDB" id="O28839"/>
<dbReference type="EvolutionaryTrace" id="O28839"/>
<dbReference type="Proteomes" id="UP000002199">
    <property type="component" value="Chromosome"/>
</dbReference>
<dbReference type="Gene3D" id="3.30.2170.10">
    <property type="entry name" value="archaeoglobus fulgidus dsm 4304 superfamily"/>
    <property type="match status" value="1"/>
</dbReference>
<dbReference type="HAMAP" id="MF_00582">
    <property type="entry name" value="UPF0215"/>
    <property type="match status" value="1"/>
</dbReference>
<dbReference type="InterPro" id="IPR002802">
    <property type="entry name" value="Endo_dU"/>
</dbReference>
<dbReference type="PANTHER" id="PTHR39518">
    <property type="entry name" value="UPF0215 PROTEIN MJ1150"/>
    <property type="match status" value="1"/>
</dbReference>
<dbReference type="PANTHER" id="PTHR39518:SF2">
    <property type="entry name" value="UPF0215 PROTEIN MJ1150"/>
    <property type="match status" value="1"/>
</dbReference>
<dbReference type="Pfam" id="PF01949">
    <property type="entry name" value="DUF99"/>
    <property type="match status" value="1"/>
</dbReference>
<dbReference type="PIRSF" id="PIRSF006380">
    <property type="entry name" value="UCP006380"/>
    <property type="match status" value="1"/>
</dbReference>
<reference key="1">
    <citation type="journal article" date="1997" name="Nature">
        <title>The complete genome sequence of the hyperthermophilic, sulphate-reducing archaeon Archaeoglobus fulgidus.</title>
        <authorList>
            <person name="Klenk H.-P."/>
            <person name="Clayton R.A."/>
            <person name="Tomb J.-F."/>
            <person name="White O."/>
            <person name="Nelson K.E."/>
            <person name="Ketchum K.A."/>
            <person name="Dodson R.J."/>
            <person name="Gwinn M.L."/>
            <person name="Hickey E.K."/>
            <person name="Peterson J.D."/>
            <person name="Richardson D.L."/>
            <person name="Kerlavage A.R."/>
            <person name="Graham D.E."/>
            <person name="Kyrpides N.C."/>
            <person name="Fleischmann R.D."/>
            <person name="Quackenbush J."/>
            <person name="Lee N.H."/>
            <person name="Sutton G.G."/>
            <person name="Gill S.R."/>
            <person name="Kirkness E.F."/>
            <person name="Dougherty B.A."/>
            <person name="McKenney K."/>
            <person name="Adams M.D."/>
            <person name="Loftus B.J."/>
            <person name="Peterson S.N."/>
            <person name="Reich C.I."/>
            <person name="McNeil L.K."/>
            <person name="Badger J.H."/>
            <person name="Glodek A."/>
            <person name="Zhou L."/>
            <person name="Overbeek R."/>
            <person name="Gocayne J.D."/>
            <person name="Weidman J.F."/>
            <person name="McDonald L.A."/>
            <person name="Utterback T.R."/>
            <person name="Cotton M.D."/>
            <person name="Spriggs T."/>
            <person name="Artiach P."/>
            <person name="Kaine B.P."/>
            <person name="Sykes S.M."/>
            <person name="Sadow P.W."/>
            <person name="D'Andrea K.P."/>
            <person name="Bowman C."/>
            <person name="Fujii C."/>
            <person name="Garland S.A."/>
            <person name="Mason T.M."/>
            <person name="Olsen G.J."/>
            <person name="Fraser C.M."/>
            <person name="Smith H.O."/>
            <person name="Woese C.R."/>
            <person name="Venter J.C."/>
        </authorList>
    </citation>
    <scope>NUCLEOTIDE SEQUENCE [LARGE SCALE GENOMIC DNA]</scope>
    <source>
        <strain>ATCC 49558 / DSM 4304 / JCM 9628 / NBRC 100126 / VC-16</strain>
    </source>
</reference>
<accession>O28839</accession>
<comment type="similarity">
    <text evidence="1">Belongs to the UPF0215 family.</text>
</comment>
<name>Y1433_ARCFU</name>
<feature type="chain" id="PRO_0000149231" description="UPF0215 protein AF_1433">
    <location>
        <begin position="1"/>
        <end position="181"/>
    </location>
</feature>
<feature type="helix" evidence="2">
    <location>
        <begin position="1"/>
        <end position="3"/>
    </location>
</feature>
<feature type="strand" evidence="2">
    <location>
        <begin position="4"/>
        <end position="13"/>
    </location>
</feature>
<feature type="strand" evidence="2">
    <location>
        <begin position="18"/>
        <end position="26"/>
    </location>
</feature>
<feature type="strand" evidence="2">
    <location>
        <begin position="29"/>
        <end position="38"/>
    </location>
</feature>
<feature type="helix" evidence="2">
    <location>
        <begin position="45"/>
        <end position="53"/>
    </location>
</feature>
<feature type="turn" evidence="2">
    <location>
        <begin position="57"/>
        <end position="61"/>
    </location>
</feature>
<feature type="strand" evidence="2">
    <location>
        <begin position="62"/>
        <end position="72"/>
    </location>
</feature>
<feature type="turn" evidence="2">
    <location>
        <begin position="73"/>
        <end position="75"/>
    </location>
</feature>
<feature type="helix" evidence="2">
    <location>
        <begin position="80"/>
        <end position="87"/>
    </location>
</feature>
<feature type="strand" evidence="2">
    <location>
        <begin position="91"/>
        <end position="97"/>
    </location>
</feature>
<feature type="helix" evidence="2">
    <location>
        <begin position="101"/>
        <end position="108"/>
    </location>
</feature>
<feature type="helix" evidence="2">
    <location>
        <begin position="114"/>
        <end position="123"/>
    </location>
</feature>
<feature type="strand" evidence="2">
    <location>
        <begin position="128"/>
        <end position="130"/>
    </location>
</feature>
<feature type="strand" evidence="2">
    <location>
        <begin position="133"/>
        <end position="140"/>
    </location>
</feature>
<feature type="helix" evidence="2">
    <location>
        <begin position="142"/>
        <end position="152"/>
    </location>
</feature>
<feature type="strand" evidence="2">
    <location>
        <begin position="154"/>
        <end position="158"/>
    </location>
</feature>
<feature type="helix" evidence="2">
    <location>
        <begin position="160"/>
        <end position="173"/>
    </location>
</feature>